<comment type="function">
    <text evidence="1 2 3">Photoreceptor required for image-forming vision at low light intensity. While most salt water fish species use retinal as chromophore, most freshwater fish use 3-dehydroretinal, or a mixture of retinal and 3-dehydroretinal (By similarity). Light-induced isomerization of 11-cis to all-trans retinal triggers a conformational change that activates signaling via G-proteins. Subsequent receptor phosphorylation mediates displacement of the bound G-protein alpha subunit by arrestin and terminates signaling (By similarity).</text>
</comment>
<comment type="biophysicochemical properties">
    <absorption>
        <max>504 nm</max>
    </absorption>
</comment>
<comment type="subcellular location">
    <subcellularLocation>
        <location evidence="2">Membrane</location>
        <topology evidence="2">Multi-pass membrane protein</topology>
    </subcellularLocation>
    <subcellularLocation>
        <location evidence="4">Cell projection</location>
        <location evidence="4">Cilium</location>
        <location evidence="4">Photoreceptor outer segment</location>
    </subcellularLocation>
    <text evidence="2">Synthesized in the inner segment (IS) of rod photoreceptor cells before vectorial transport to disk membranes in the rod outer segment (OS) photosensory cilia.</text>
</comment>
<comment type="PTM">
    <text evidence="1">Phosphorylated on some or all of the serine and threonine residues present in the C-terminal region.</text>
</comment>
<comment type="PTM">
    <text evidence="1">Contains one covalently linked retinal chromophore.</text>
</comment>
<comment type="similarity">
    <text evidence="6">Belongs to the G-protein coupled receptor 1 family. Opsin subfamily.</text>
</comment>
<reference key="1">
    <citation type="journal article" date="1995" name="Invest. Ophthalmol. Vis. Sci.">
        <title>Rhodopsin from the fish, Astyanax: role of tyrosine 261 in the red shift.</title>
        <authorList>
            <person name="Yokoyama R."/>
            <person name="Knox B.E."/>
            <person name="Yokoyama S."/>
        </authorList>
    </citation>
    <scope>NUCLEOTIDE SEQUENCE [GENOMIC DNA]</scope>
</reference>
<evidence type="ECO:0000250" key="1">
    <source>
        <dbReference type="UniProtKB" id="P02699"/>
    </source>
</evidence>
<evidence type="ECO:0000250" key="2">
    <source>
        <dbReference type="UniProtKB" id="P08100"/>
    </source>
</evidence>
<evidence type="ECO:0000250" key="3">
    <source>
        <dbReference type="UniProtKB" id="P32309"/>
    </source>
</evidence>
<evidence type="ECO:0000250" key="4">
    <source>
        <dbReference type="UniProtKB" id="P35359"/>
    </source>
</evidence>
<evidence type="ECO:0000255" key="5"/>
<evidence type="ECO:0000255" key="6">
    <source>
        <dbReference type="PROSITE-ProRule" id="PRU00521"/>
    </source>
</evidence>
<evidence type="ECO:0000256" key="7">
    <source>
        <dbReference type="SAM" id="MobiDB-lite"/>
    </source>
</evidence>
<evidence type="ECO:0000305" key="8"/>
<gene>
    <name type="primary">rho</name>
</gene>
<keyword id="KW-0966">Cell projection</keyword>
<keyword id="KW-0157">Chromophore</keyword>
<keyword id="KW-1015">Disulfide bond</keyword>
<keyword id="KW-0297">G-protein coupled receptor</keyword>
<keyword id="KW-0325">Glycoprotein</keyword>
<keyword id="KW-0449">Lipoprotein</keyword>
<keyword id="KW-0472">Membrane</keyword>
<keyword id="KW-0564">Palmitate</keyword>
<keyword id="KW-0597">Phosphoprotein</keyword>
<keyword id="KW-0600">Photoreceptor protein</keyword>
<keyword id="KW-0675">Receptor</keyword>
<keyword id="KW-0681">Retinal protein</keyword>
<keyword id="KW-0716">Sensory transduction</keyword>
<keyword id="KW-0807">Transducer</keyword>
<keyword id="KW-0812">Transmembrane</keyword>
<keyword id="KW-1133">Transmembrane helix</keyword>
<keyword id="KW-0844">Vision</keyword>
<name>OPSD_PSAFA</name>
<dbReference type="EMBL" id="U12328">
    <property type="protein sequence ID" value="AAA74422.1"/>
    <property type="molecule type" value="Genomic_DNA"/>
</dbReference>
<dbReference type="PIR" id="I50047">
    <property type="entry name" value="I50047"/>
</dbReference>
<dbReference type="SMR" id="P41590"/>
<dbReference type="GlyCosmos" id="P41590">
    <property type="glycosylation" value="2 sites, No reported glycans"/>
</dbReference>
<dbReference type="KEGG" id="amex:103040284"/>
<dbReference type="GO" id="GO:0016020">
    <property type="term" value="C:membrane"/>
    <property type="evidence" value="ECO:0000250"/>
    <property type="project" value="UniProtKB"/>
</dbReference>
<dbReference type="GO" id="GO:0097381">
    <property type="term" value="C:photoreceptor disc membrane"/>
    <property type="evidence" value="ECO:0000250"/>
    <property type="project" value="UniProtKB"/>
</dbReference>
<dbReference type="GO" id="GO:0005886">
    <property type="term" value="C:plasma membrane"/>
    <property type="evidence" value="ECO:0000250"/>
    <property type="project" value="UniProtKB"/>
</dbReference>
<dbReference type="GO" id="GO:0005502">
    <property type="term" value="F:11-cis retinal binding"/>
    <property type="evidence" value="ECO:0000250"/>
    <property type="project" value="UniProtKB"/>
</dbReference>
<dbReference type="GO" id="GO:0008020">
    <property type="term" value="F:G protein-coupled photoreceptor activity"/>
    <property type="evidence" value="ECO:0000250"/>
    <property type="project" value="UniProtKB"/>
</dbReference>
<dbReference type="GO" id="GO:0016038">
    <property type="term" value="P:absorption of visible light"/>
    <property type="evidence" value="ECO:0000250"/>
    <property type="project" value="UniProtKB"/>
</dbReference>
<dbReference type="GO" id="GO:0016056">
    <property type="term" value="P:G protein-coupled opsin signaling pathway"/>
    <property type="evidence" value="ECO:0000250"/>
    <property type="project" value="UniProtKB"/>
</dbReference>
<dbReference type="GO" id="GO:0007601">
    <property type="term" value="P:visual perception"/>
    <property type="evidence" value="ECO:0007669"/>
    <property type="project" value="UniProtKB-KW"/>
</dbReference>
<dbReference type="CDD" id="cd15080">
    <property type="entry name" value="7tmA_MWS_opsin"/>
    <property type="match status" value="1"/>
</dbReference>
<dbReference type="FunFam" id="1.20.1070.10:FF:000018">
    <property type="entry name" value="Rhodopsin"/>
    <property type="match status" value="1"/>
</dbReference>
<dbReference type="Gene3D" id="1.20.1070.10">
    <property type="entry name" value="Rhodopsin 7-helix transmembrane proteins"/>
    <property type="match status" value="1"/>
</dbReference>
<dbReference type="InterPro" id="IPR050125">
    <property type="entry name" value="GPCR_opsins"/>
</dbReference>
<dbReference type="InterPro" id="IPR000276">
    <property type="entry name" value="GPCR_Rhodpsn"/>
</dbReference>
<dbReference type="InterPro" id="IPR017452">
    <property type="entry name" value="GPCR_Rhodpsn_7TM"/>
</dbReference>
<dbReference type="InterPro" id="IPR001760">
    <property type="entry name" value="Opsin"/>
</dbReference>
<dbReference type="InterPro" id="IPR027430">
    <property type="entry name" value="Retinal_BS"/>
</dbReference>
<dbReference type="InterPro" id="IPR000732">
    <property type="entry name" value="Rhodopsin"/>
</dbReference>
<dbReference type="InterPro" id="IPR019477">
    <property type="entry name" value="Rhodopsin_N"/>
</dbReference>
<dbReference type="PANTHER" id="PTHR24240">
    <property type="entry name" value="OPSIN"/>
    <property type="match status" value="1"/>
</dbReference>
<dbReference type="Pfam" id="PF00001">
    <property type="entry name" value="7tm_1"/>
    <property type="match status" value="1"/>
</dbReference>
<dbReference type="Pfam" id="PF10413">
    <property type="entry name" value="Rhodopsin_N"/>
    <property type="match status" value="1"/>
</dbReference>
<dbReference type="PRINTS" id="PR00237">
    <property type="entry name" value="GPCRRHODOPSN"/>
</dbReference>
<dbReference type="PRINTS" id="PR00238">
    <property type="entry name" value="OPSIN"/>
</dbReference>
<dbReference type="PRINTS" id="PR00579">
    <property type="entry name" value="RHODOPSIN"/>
</dbReference>
<dbReference type="SUPFAM" id="SSF81321">
    <property type="entry name" value="Family A G protein-coupled receptor-like"/>
    <property type="match status" value="1"/>
</dbReference>
<dbReference type="PROSITE" id="PS50262">
    <property type="entry name" value="G_PROTEIN_RECEP_F1_2"/>
    <property type="match status" value="1"/>
</dbReference>
<dbReference type="PROSITE" id="PS00238">
    <property type="entry name" value="OPSIN"/>
    <property type="match status" value="1"/>
</dbReference>
<accession>P41590</accession>
<proteinExistence type="evidence at protein level"/>
<organism>
    <name type="scientific">Psalidodon fasciatus</name>
    <name type="common">Banded astyanax</name>
    <name type="synonym">Astyanax fasciatus</name>
    <dbReference type="NCBI Taxonomy" id="223369"/>
    <lineage>
        <taxon>Eukaryota</taxon>
        <taxon>Metazoa</taxon>
        <taxon>Chordata</taxon>
        <taxon>Craniata</taxon>
        <taxon>Vertebrata</taxon>
        <taxon>Euteleostomi</taxon>
        <taxon>Actinopterygii</taxon>
        <taxon>Neopterygii</taxon>
        <taxon>Teleostei</taxon>
        <taxon>Ostariophysi</taxon>
        <taxon>Characiformes</taxon>
        <taxon>Characoidei</taxon>
        <taxon>Acestrorhamphidae</taxon>
        <taxon>Acestrorhamphidae polyphyletic genera</taxon>
        <taxon>Psalidodon</taxon>
    </lineage>
</organism>
<sequence>MNGTEGPYFYVPMSNATGVVRSPYEYPQYYLAPPWAYACLAAYMFFLILVGFPVNFLTLYVTIEHKKLRTPLNYILLNLAVADLFMVFGGFTTTMYTSLNGYFVFGRLGCNLEGFFATFGGINSLWCLVVLSIERWVVVCKPMSNFRFGENHAIMGVAFTWFMALACTVPPLVGWSRYIPEGMQCSCGIDYYTRAEGFNNESFVIYMFVVHFLTPLFVITFCYGRLVCTVKEAAAQQQESETTQRAEREVTRMVILMFIAYLVCWLPYASVSWWIFTNQGSEFGPIFMTVPAFFAKSSSIYNPVIYICLNKQFRHCMITTLCCGKNPFEEEEGASTTASKTEASSVSSVSPA</sequence>
<protein>
    <recommendedName>
        <fullName>Rhodopsin</fullName>
    </recommendedName>
</protein>
<feature type="chain" id="PRO_0000197649" description="Rhodopsin">
    <location>
        <begin position="1"/>
        <end position="352"/>
    </location>
</feature>
<feature type="topological domain" description="Extracellular" evidence="8">
    <location>
        <begin position="1"/>
        <end position="36"/>
    </location>
</feature>
<feature type="transmembrane region" description="Helical; Name=1" evidence="1">
    <location>
        <begin position="37"/>
        <end position="61"/>
    </location>
</feature>
<feature type="topological domain" description="Cytoplasmic" evidence="8">
    <location>
        <begin position="62"/>
        <end position="73"/>
    </location>
</feature>
<feature type="transmembrane region" description="Helical; Name=2" evidence="1">
    <location>
        <begin position="74"/>
        <end position="96"/>
    </location>
</feature>
<feature type="topological domain" description="Extracellular" evidence="8">
    <location>
        <begin position="97"/>
        <end position="110"/>
    </location>
</feature>
<feature type="transmembrane region" description="Helical; Name=3" evidence="1">
    <location>
        <begin position="111"/>
        <end position="133"/>
    </location>
</feature>
<feature type="topological domain" description="Cytoplasmic" evidence="8">
    <location>
        <begin position="134"/>
        <end position="152"/>
    </location>
</feature>
<feature type="transmembrane region" description="Helical; Name=4" evidence="1">
    <location>
        <begin position="153"/>
        <end position="173"/>
    </location>
</feature>
<feature type="topological domain" description="Extracellular" evidence="8">
    <location>
        <begin position="174"/>
        <end position="202"/>
    </location>
</feature>
<feature type="transmembrane region" description="Helical; Name=5" evidence="1">
    <location>
        <begin position="203"/>
        <end position="224"/>
    </location>
</feature>
<feature type="topological domain" description="Cytoplasmic" evidence="8">
    <location>
        <begin position="225"/>
        <end position="252"/>
    </location>
</feature>
<feature type="transmembrane region" description="Helical; Name=6" evidence="1">
    <location>
        <begin position="253"/>
        <end position="274"/>
    </location>
</feature>
<feature type="topological domain" description="Extracellular" evidence="8">
    <location>
        <begin position="275"/>
        <end position="286"/>
    </location>
</feature>
<feature type="transmembrane region" description="Helical; Name=7" evidence="1">
    <location>
        <begin position="287"/>
        <end position="308"/>
    </location>
</feature>
<feature type="topological domain" description="Cytoplasmic" evidence="8">
    <location>
        <begin position="309"/>
        <end position="352"/>
    </location>
</feature>
<feature type="region of interest" description="Disordered" evidence="7">
    <location>
        <begin position="331"/>
        <end position="352"/>
    </location>
</feature>
<feature type="short sequence motif" description="'Ionic lock' involved in activated form stabilization" evidence="1">
    <location>
        <begin position="134"/>
        <end position="136"/>
    </location>
</feature>
<feature type="compositionally biased region" description="Low complexity" evidence="7">
    <location>
        <begin position="334"/>
        <end position="352"/>
    </location>
</feature>
<feature type="site" description="Plays an important role in the conformation switch to the active conformation" evidence="1">
    <location>
        <position position="113"/>
    </location>
</feature>
<feature type="modified residue" description="N6-(retinylidene)lysine" evidence="1">
    <location>
        <position position="296"/>
    </location>
</feature>
<feature type="lipid moiety-binding region" description="S-palmitoyl cysteine" evidence="1">
    <location>
        <position position="322"/>
    </location>
</feature>
<feature type="lipid moiety-binding region" description="S-palmitoyl cysteine" evidence="1">
    <location>
        <position position="323"/>
    </location>
</feature>
<feature type="glycosylation site" description="N-linked (GlcNAc...) asparagine" evidence="5">
    <location>
        <position position="2"/>
    </location>
</feature>
<feature type="glycosylation site" description="N-linked (GlcNAc...) asparagine" evidence="5">
    <location>
        <position position="15"/>
    </location>
</feature>
<feature type="disulfide bond" evidence="6">
    <location>
        <begin position="110"/>
        <end position="187"/>
    </location>
</feature>
<feature type="mutagenesis site" description="Decrease of absorbance minimum from 504 to 496 nm.">
    <original>Y</original>
    <variation>F</variation>
    <location>
        <position position="261"/>
    </location>
</feature>